<keyword id="KW-1003">Cell membrane</keyword>
<keyword id="KW-1015">Disulfide bond</keyword>
<keyword id="KW-0297">G-protein coupled receptor</keyword>
<keyword id="KW-0472">Membrane</keyword>
<keyword id="KW-0675">Receptor</keyword>
<keyword id="KW-1185">Reference proteome</keyword>
<keyword id="KW-0807">Transducer</keyword>
<keyword id="KW-0812">Transmembrane</keyword>
<keyword id="KW-1133">Transmembrane helix</keyword>
<gene>
    <name type="primary">Gpr26</name>
</gene>
<protein>
    <recommendedName>
        <fullName>G-protein coupled receptor 26</fullName>
    </recommendedName>
</protein>
<proteinExistence type="evidence at transcript level"/>
<dbReference type="EMBL" id="AK036100">
    <property type="protein sequence ID" value="BAC29305.1"/>
    <property type="molecule type" value="mRNA"/>
</dbReference>
<dbReference type="EMBL" id="AK042755">
    <property type="protein sequence ID" value="BAC31354.1"/>
    <property type="molecule type" value="mRNA"/>
</dbReference>
<dbReference type="EMBL" id="AY255585">
    <property type="protein sequence ID" value="AAO85097.1"/>
    <property type="molecule type" value="mRNA"/>
</dbReference>
<dbReference type="CCDS" id="CCDS21920.1"/>
<dbReference type="RefSeq" id="NP_775586.1">
    <property type="nucleotide sequence ID" value="NM_173410.3"/>
</dbReference>
<dbReference type="SMR" id="Q8BZA7"/>
<dbReference type="CORUM" id="Q8BZA7"/>
<dbReference type="FunCoup" id="Q8BZA7">
    <property type="interactions" value="176"/>
</dbReference>
<dbReference type="STRING" id="10090.ENSMUSP00000041664"/>
<dbReference type="PhosphoSitePlus" id="Q8BZA7"/>
<dbReference type="PaxDb" id="10090-ENSMUSP00000041664"/>
<dbReference type="ProteomicsDB" id="271040"/>
<dbReference type="Antibodypedia" id="19086">
    <property type="antibodies" value="167 antibodies from 26 providers"/>
</dbReference>
<dbReference type="DNASU" id="233919"/>
<dbReference type="Ensembl" id="ENSMUST00000045840.5">
    <property type="protein sequence ID" value="ENSMUSP00000041664.5"/>
    <property type="gene ID" value="ENSMUSG00000040125.5"/>
</dbReference>
<dbReference type="GeneID" id="233919"/>
<dbReference type="KEGG" id="mmu:233919"/>
<dbReference type="UCSC" id="uc009kbs.1">
    <property type="organism name" value="mouse"/>
</dbReference>
<dbReference type="AGR" id="MGI:2441758"/>
<dbReference type="CTD" id="2849"/>
<dbReference type="MGI" id="MGI:2441758">
    <property type="gene designation" value="Gpr26"/>
</dbReference>
<dbReference type="VEuPathDB" id="HostDB:ENSMUSG00000040125"/>
<dbReference type="eggNOG" id="KOG3656">
    <property type="taxonomic scope" value="Eukaryota"/>
</dbReference>
<dbReference type="GeneTree" id="ENSGT00950000183001"/>
<dbReference type="HOGENOM" id="CLU_009579_3_5_1"/>
<dbReference type="InParanoid" id="Q8BZA7"/>
<dbReference type="OMA" id="WLGFHHL"/>
<dbReference type="OrthoDB" id="6159456at2759"/>
<dbReference type="PhylomeDB" id="Q8BZA7"/>
<dbReference type="TreeFam" id="TF332434"/>
<dbReference type="BioGRID-ORCS" id="233919">
    <property type="hits" value="0 hits in 77 CRISPR screens"/>
</dbReference>
<dbReference type="PRO" id="PR:Q8BZA7"/>
<dbReference type="Proteomes" id="UP000000589">
    <property type="component" value="Chromosome 7"/>
</dbReference>
<dbReference type="RNAct" id="Q8BZA7">
    <property type="molecule type" value="protein"/>
</dbReference>
<dbReference type="Bgee" id="ENSMUSG00000040125">
    <property type="expression patterns" value="Expressed in superior frontal gyrus and 61 other cell types or tissues"/>
</dbReference>
<dbReference type="ExpressionAtlas" id="Q8BZA7">
    <property type="expression patterns" value="baseline and differential"/>
</dbReference>
<dbReference type="GO" id="GO:0005886">
    <property type="term" value="C:plasma membrane"/>
    <property type="evidence" value="ECO:0007669"/>
    <property type="project" value="UniProtKB-SubCell"/>
</dbReference>
<dbReference type="GO" id="GO:0004930">
    <property type="term" value="F:G protein-coupled receptor activity"/>
    <property type="evidence" value="ECO:0000250"/>
    <property type="project" value="UniProtKB"/>
</dbReference>
<dbReference type="GO" id="GO:0007189">
    <property type="term" value="P:adenylate cyclase-activating G protein-coupled receptor signaling pathway"/>
    <property type="evidence" value="ECO:0000250"/>
    <property type="project" value="UniProtKB"/>
</dbReference>
<dbReference type="CDD" id="cd15219">
    <property type="entry name" value="7tmA_GPR26_GPR78-like"/>
    <property type="match status" value="1"/>
</dbReference>
<dbReference type="FunFam" id="1.20.1070.10:FF:000095">
    <property type="entry name" value="G-protein coupled receptor 26"/>
    <property type="match status" value="1"/>
</dbReference>
<dbReference type="Gene3D" id="1.20.1070.10">
    <property type="entry name" value="Rhodopsin 7-helix transmembrane proteins"/>
    <property type="match status" value="1"/>
</dbReference>
<dbReference type="InterPro" id="IPR051880">
    <property type="entry name" value="GPC_Orphan_Receptors"/>
</dbReference>
<dbReference type="InterPro" id="IPR000276">
    <property type="entry name" value="GPCR_Rhodpsn"/>
</dbReference>
<dbReference type="InterPro" id="IPR017452">
    <property type="entry name" value="GPCR_Rhodpsn_7TM"/>
</dbReference>
<dbReference type="InterPro" id="IPR049579">
    <property type="entry name" value="GPR26/78-like"/>
</dbReference>
<dbReference type="PANTHER" id="PTHR24245">
    <property type="entry name" value="G-PROTEIN COUPLED RECEPTOR"/>
    <property type="match status" value="1"/>
</dbReference>
<dbReference type="PANTHER" id="PTHR24245:SF6">
    <property type="entry name" value="G-PROTEIN COUPLED RECEPTOR 26"/>
    <property type="match status" value="1"/>
</dbReference>
<dbReference type="Pfam" id="PF00001">
    <property type="entry name" value="7tm_1"/>
    <property type="match status" value="1"/>
</dbReference>
<dbReference type="PRINTS" id="PR00237">
    <property type="entry name" value="GPCRRHODOPSN"/>
</dbReference>
<dbReference type="SUPFAM" id="SSF81321">
    <property type="entry name" value="Family A G protein-coupled receptor-like"/>
    <property type="match status" value="1"/>
</dbReference>
<dbReference type="PROSITE" id="PS50262">
    <property type="entry name" value="G_PROTEIN_RECEP_F1_2"/>
    <property type="match status" value="1"/>
</dbReference>
<reference key="1">
    <citation type="journal article" date="2005" name="Science">
        <title>The transcriptional landscape of the mammalian genome.</title>
        <authorList>
            <person name="Carninci P."/>
            <person name="Kasukawa T."/>
            <person name="Katayama S."/>
            <person name="Gough J."/>
            <person name="Frith M.C."/>
            <person name="Maeda N."/>
            <person name="Oyama R."/>
            <person name="Ravasi T."/>
            <person name="Lenhard B."/>
            <person name="Wells C."/>
            <person name="Kodzius R."/>
            <person name="Shimokawa K."/>
            <person name="Bajic V.B."/>
            <person name="Brenner S.E."/>
            <person name="Batalov S."/>
            <person name="Forrest A.R."/>
            <person name="Zavolan M."/>
            <person name="Davis M.J."/>
            <person name="Wilming L.G."/>
            <person name="Aidinis V."/>
            <person name="Allen J.E."/>
            <person name="Ambesi-Impiombato A."/>
            <person name="Apweiler R."/>
            <person name="Aturaliya R.N."/>
            <person name="Bailey T.L."/>
            <person name="Bansal M."/>
            <person name="Baxter L."/>
            <person name="Beisel K.W."/>
            <person name="Bersano T."/>
            <person name="Bono H."/>
            <person name="Chalk A.M."/>
            <person name="Chiu K.P."/>
            <person name="Choudhary V."/>
            <person name="Christoffels A."/>
            <person name="Clutterbuck D.R."/>
            <person name="Crowe M.L."/>
            <person name="Dalla E."/>
            <person name="Dalrymple B.P."/>
            <person name="de Bono B."/>
            <person name="Della Gatta G."/>
            <person name="di Bernardo D."/>
            <person name="Down T."/>
            <person name="Engstrom P."/>
            <person name="Fagiolini M."/>
            <person name="Faulkner G."/>
            <person name="Fletcher C.F."/>
            <person name="Fukushima T."/>
            <person name="Furuno M."/>
            <person name="Futaki S."/>
            <person name="Gariboldi M."/>
            <person name="Georgii-Hemming P."/>
            <person name="Gingeras T.R."/>
            <person name="Gojobori T."/>
            <person name="Green R.E."/>
            <person name="Gustincich S."/>
            <person name="Harbers M."/>
            <person name="Hayashi Y."/>
            <person name="Hensch T.K."/>
            <person name="Hirokawa N."/>
            <person name="Hill D."/>
            <person name="Huminiecki L."/>
            <person name="Iacono M."/>
            <person name="Ikeo K."/>
            <person name="Iwama A."/>
            <person name="Ishikawa T."/>
            <person name="Jakt M."/>
            <person name="Kanapin A."/>
            <person name="Katoh M."/>
            <person name="Kawasawa Y."/>
            <person name="Kelso J."/>
            <person name="Kitamura H."/>
            <person name="Kitano H."/>
            <person name="Kollias G."/>
            <person name="Krishnan S.P."/>
            <person name="Kruger A."/>
            <person name="Kummerfeld S.K."/>
            <person name="Kurochkin I.V."/>
            <person name="Lareau L.F."/>
            <person name="Lazarevic D."/>
            <person name="Lipovich L."/>
            <person name="Liu J."/>
            <person name="Liuni S."/>
            <person name="McWilliam S."/>
            <person name="Madan Babu M."/>
            <person name="Madera M."/>
            <person name="Marchionni L."/>
            <person name="Matsuda H."/>
            <person name="Matsuzawa S."/>
            <person name="Miki H."/>
            <person name="Mignone F."/>
            <person name="Miyake S."/>
            <person name="Morris K."/>
            <person name="Mottagui-Tabar S."/>
            <person name="Mulder N."/>
            <person name="Nakano N."/>
            <person name="Nakauchi H."/>
            <person name="Ng P."/>
            <person name="Nilsson R."/>
            <person name="Nishiguchi S."/>
            <person name="Nishikawa S."/>
            <person name="Nori F."/>
            <person name="Ohara O."/>
            <person name="Okazaki Y."/>
            <person name="Orlando V."/>
            <person name="Pang K.C."/>
            <person name="Pavan W.J."/>
            <person name="Pavesi G."/>
            <person name="Pesole G."/>
            <person name="Petrovsky N."/>
            <person name="Piazza S."/>
            <person name="Reed J."/>
            <person name="Reid J.F."/>
            <person name="Ring B.Z."/>
            <person name="Ringwald M."/>
            <person name="Rost B."/>
            <person name="Ruan Y."/>
            <person name="Salzberg S.L."/>
            <person name="Sandelin A."/>
            <person name="Schneider C."/>
            <person name="Schoenbach C."/>
            <person name="Sekiguchi K."/>
            <person name="Semple C.A."/>
            <person name="Seno S."/>
            <person name="Sessa L."/>
            <person name="Sheng Y."/>
            <person name="Shibata Y."/>
            <person name="Shimada H."/>
            <person name="Shimada K."/>
            <person name="Silva D."/>
            <person name="Sinclair B."/>
            <person name="Sperling S."/>
            <person name="Stupka E."/>
            <person name="Sugiura K."/>
            <person name="Sultana R."/>
            <person name="Takenaka Y."/>
            <person name="Taki K."/>
            <person name="Tammoja K."/>
            <person name="Tan S.L."/>
            <person name="Tang S."/>
            <person name="Taylor M.S."/>
            <person name="Tegner J."/>
            <person name="Teichmann S.A."/>
            <person name="Ueda H.R."/>
            <person name="van Nimwegen E."/>
            <person name="Verardo R."/>
            <person name="Wei C.L."/>
            <person name="Yagi K."/>
            <person name="Yamanishi H."/>
            <person name="Zabarovsky E."/>
            <person name="Zhu S."/>
            <person name="Zimmer A."/>
            <person name="Hide W."/>
            <person name="Bult C."/>
            <person name="Grimmond S.M."/>
            <person name="Teasdale R.D."/>
            <person name="Liu E.T."/>
            <person name="Brusic V."/>
            <person name="Quackenbush J."/>
            <person name="Wahlestedt C."/>
            <person name="Mattick J.S."/>
            <person name="Hume D.A."/>
            <person name="Kai C."/>
            <person name="Sasaki D."/>
            <person name="Tomaru Y."/>
            <person name="Fukuda S."/>
            <person name="Kanamori-Katayama M."/>
            <person name="Suzuki M."/>
            <person name="Aoki J."/>
            <person name="Arakawa T."/>
            <person name="Iida J."/>
            <person name="Imamura K."/>
            <person name="Itoh M."/>
            <person name="Kato T."/>
            <person name="Kawaji H."/>
            <person name="Kawagashira N."/>
            <person name="Kawashima T."/>
            <person name="Kojima M."/>
            <person name="Kondo S."/>
            <person name="Konno H."/>
            <person name="Nakano K."/>
            <person name="Ninomiya N."/>
            <person name="Nishio T."/>
            <person name="Okada M."/>
            <person name="Plessy C."/>
            <person name="Shibata K."/>
            <person name="Shiraki T."/>
            <person name="Suzuki S."/>
            <person name="Tagami M."/>
            <person name="Waki K."/>
            <person name="Watahiki A."/>
            <person name="Okamura-Oho Y."/>
            <person name="Suzuki H."/>
            <person name="Kawai J."/>
            <person name="Hayashizaki Y."/>
        </authorList>
    </citation>
    <scope>NUCLEOTIDE SEQUENCE [LARGE SCALE MRNA]</scope>
    <source>
        <strain>C57BL/6J</strain>
        <tissue>Cerebellum</tissue>
    </source>
</reference>
<reference key="2">
    <citation type="journal article" date="2003" name="Proc. Natl. Acad. Sci. U.S.A.">
        <title>The G protein-coupled receptor repertoires of human and mouse.</title>
        <authorList>
            <person name="Vassilatis D.K."/>
            <person name="Hohmann J.G."/>
            <person name="Zeng H."/>
            <person name="Li F."/>
            <person name="Ranchalis J.E."/>
            <person name="Mortrud M.T."/>
            <person name="Brown A."/>
            <person name="Rodriguez S.S."/>
            <person name="Weller J.R."/>
            <person name="Wright A.C."/>
            <person name="Bergmann J.E."/>
            <person name="Gaitanaris G.A."/>
        </authorList>
    </citation>
    <scope>NUCLEOTIDE SEQUENCE [LARGE SCALE MRNA] OF 117-291</scope>
</reference>
<reference key="3">
    <citation type="journal article" date="2007" name="Biochim. Biophys. Acta">
        <title>Tissue distribution and functional analyses of the constitutively active orphan G protein coupled receptors, GPR26 and GPR78.</title>
        <authorList>
            <person name="Jones P.G."/>
            <person name="Nawoschik S.P."/>
            <person name="Sreekumar K."/>
            <person name="Uveges A.J."/>
            <person name="Tseng E."/>
            <person name="Zhang L."/>
            <person name="Johnson J."/>
            <person name="He L."/>
            <person name="Paulsen J.E."/>
            <person name="Bates B."/>
            <person name="Pausch M.H."/>
        </authorList>
    </citation>
    <scope>DEVELOPMENTAL STAGE</scope>
    <scope>TISSUE SPECIFICITY</scope>
</reference>
<accession>Q8BZA7</accession>
<accession>Q80T55</accession>
<accession>Q8BXZ5</accession>
<sequence>MNSWDAGLAGLLVGTIGVSLLSNGLVLLCLLHSADIRRQAPALFTLNLTCGNLLCTVVNMPLTLAGVVAQRQPAGDRLCRLAAFLDTFLAANSMLSMAALSIDRWVAVVFPLSYRAKMRLRDAAFMVAYTWLHALTFPATALALSWLGFHQLYASCTLCSRRPDERLRFAVFTSAFHALSFLLSFIVLCFTYLKVLKVARFHCKRIDVITMQTLVLLVDIHPSVRERCLEEQKRRRQRATKKISTFIGTFLVCFAPYVITRLVELFSTAPIGSHWGVLSKCLAYSKAASDPFVYSLLRHQYRRSCKELLNRIFNRRSLHSVGLTGDSHSQNILPVSE</sequence>
<evidence type="ECO:0000250" key="1"/>
<evidence type="ECO:0000255" key="2"/>
<evidence type="ECO:0000255" key="3">
    <source>
        <dbReference type="PROSITE-ProRule" id="PRU00521"/>
    </source>
</evidence>
<evidence type="ECO:0000269" key="4">
    <source>
    </source>
</evidence>
<evidence type="ECO:0000305" key="5"/>
<comment type="function">
    <text evidence="1">Orphan receptor. Displays a significant level of constitutive activity. Its effect is mediated by G(s)-alpha protein that stimulate adenylate cyclase, resulting in an elevation of intracellular cAMP (By similarity).</text>
</comment>
<comment type="subcellular location">
    <subcellularLocation>
        <location>Cell membrane</location>
        <topology>Multi-pass membrane protein</topology>
    </subcellularLocation>
</comment>
<comment type="tissue specificity">
    <text evidence="4">Exclusively expressed in the brain. Prominent expression is detected throughout the entire neocortex at all rostrocaudal and dorsoventral levels. Strong expression is detected in olfactory and auditory sensory areas.</text>
</comment>
<comment type="developmental stage">
    <text evidence="4">At 14.5 dpc, expression is limited to the developing nervous system with strong expression in the developing cortex, midbrain, cerebellum and medulla. Weaker expression is also detected in the trigeminal ganglion.</text>
</comment>
<comment type="similarity">
    <text evidence="3">Belongs to the G-protein coupled receptor 1 family.</text>
</comment>
<name>GPR26_MOUSE</name>
<feature type="chain" id="PRO_0000069546" description="G-protein coupled receptor 26">
    <location>
        <begin position="1"/>
        <end position="337"/>
    </location>
</feature>
<feature type="topological domain" description="Extracellular" evidence="2">
    <location>
        <begin position="1"/>
        <end position="10"/>
    </location>
</feature>
<feature type="transmembrane region" description="Helical; Name=1" evidence="2">
    <location>
        <begin position="11"/>
        <end position="31"/>
    </location>
</feature>
<feature type="topological domain" description="Cytoplasmic" evidence="2">
    <location>
        <begin position="32"/>
        <end position="47"/>
    </location>
</feature>
<feature type="transmembrane region" description="Helical; Name=2" evidence="2">
    <location>
        <begin position="48"/>
        <end position="68"/>
    </location>
</feature>
<feature type="topological domain" description="Extracellular" evidence="2">
    <location>
        <begin position="69"/>
        <end position="81"/>
    </location>
</feature>
<feature type="transmembrane region" description="Helical; Name=3" evidence="2">
    <location>
        <begin position="82"/>
        <end position="102"/>
    </location>
</feature>
<feature type="topological domain" description="Cytoplasmic" evidence="2">
    <location>
        <begin position="103"/>
        <end position="123"/>
    </location>
</feature>
<feature type="transmembrane region" description="Helical; Name=4" evidence="2">
    <location>
        <begin position="124"/>
        <end position="144"/>
    </location>
</feature>
<feature type="topological domain" description="Extracellular" evidence="2">
    <location>
        <begin position="145"/>
        <end position="168"/>
    </location>
</feature>
<feature type="transmembrane region" description="Helical; Name=5" evidence="2">
    <location>
        <begin position="169"/>
        <end position="189"/>
    </location>
</feature>
<feature type="topological domain" description="Cytoplasmic" evidence="2">
    <location>
        <begin position="190"/>
        <end position="245"/>
    </location>
</feature>
<feature type="transmembrane region" description="Helical; Name=6" evidence="2">
    <location>
        <begin position="246"/>
        <end position="266"/>
    </location>
</feature>
<feature type="topological domain" description="Extracellular" evidence="2">
    <location>
        <begin position="267"/>
        <end position="276"/>
    </location>
</feature>
<feature type="transmembrane region" description="Helical; Name=7" evidence="2">
    <location>
        <begin position="277"/>
        <end position="297"/>
    </location>
</feature>
<feature type="topological domain" description="Cytoplasmic" evidence="2">
    <location>
        <begin position="298"/>
        <end position="337"/>
    </location>
</feature>
<feature type="disulfide bond" evidence="3">
    <location>
        <begin position="79"/>
        <end position="156"/>
    </location>
</feature>
<feature type="sequence conflict" description="In Ref. 2; AAO85097." evidence="5" ref="2">
    <original>C</original>
    <variation>R</variation>
    <location>
        <position position="156"/>
    </location>
</feature>
<organism>
    <name type="scientific">Mus musculus</name>
    <name type="common">Mouse</name>
    <dbReference type="NCBI Taxonomy" id="10090"/>
    <lineage>
        <taxon>Eukaryota</taxon>
        <taxon>Metazoa</taxon>
        <taxon>Chordata</taxon>
        <taxon>Craniata</taxon>
        <taxon>Vertebrata</taxon>
        <taxon>Euteleostomi</taxon>
        <taxon>Mammalia</taxon>
        <taxon>Eutheria</taxon>
        <taxon>Euarchontoglires</taxon>
        <taxon>Glires</taxon>
        <taxon>Rodentia</taxon>
        <taxon>Myomorpha</taxon>
        <taxon>Muroidea</taxon>
        <taxon>Muridae</taxon>
        <taxon>Murinae</taxon>
        <taxon>Mus</taxon>
        <taxon>Mus</taxon>
    </lineage>
</organism>